<name>VNS3_AQRVC</name>
<organismHost>
    <name type="scientific">Notemigonus crysoleucas</name>
    <name type="common">Golden shiner</name>
    <name type="synonym">Cyprinus crysoleucas</name>
    <dbReference type="NCBI Taxonomy" id="28800"/>
</organismHost>
<organismHost>
    <name type="scientific">Pimephales promelas</name>
    <name type="common">Fathead minnow</name>
    <dbReference type="NCBI Taxonomy" id="90988"/>
</organismHost>
<gene>
    <name type="primary">S11</name>
</gene>
<evidence type="ECO:0000305" key="1"/>
<comment type="similarity">
    <text evidence="1">Belongs to the aquareoviridae NS3 protein family.</text>
</comment>
<feature type="chain" id="PRO_0000404179" description="Non-structural protein 3">
    <location>
        <begin position="1"/>
        <end position="244"/>
    </location>
</feature>
<reference key="1">
    <citation type="journal article" date="2002" name="J. Gen. Virol.">
        <title>Common evolutionary origin of aquareoviruses and orthoreoviruses revealed by genome characterization of Golden shiner reovirus, Grass carp reovirus, Striped bass reovirus and golden ide reovirus (genus Aquareovirus, family Reoviridae).</title>
        <authorList>
            <person name="Attoui H."/>
            <person name="Fang Q."/>
            <person name="Mohd Jaafar F."/>
            <person name="Cantaloube J.F."/>
            <person name="Biagini P."/>
            <person name="de Micco P."/>
            <person name="de Lamballerie X."/>
        </authorList>
    </citation>
    <scope>NUCLEOTIDE SEQUENCE [GENOMIC RNA]</scope>
</reference>
<dbReference type="EMBL" id="AF403408">
    <property type="protein sequence ID" value="AAM92755.1"/>
    <property type="molecule type" value="Genomic_RNA"/>
</dbReference>
<dbReference type="RefSeq" id="NP_938071.1">
    <property type="nucleotide sequence ID" value="NC_005176.1"/>
</dbReference>
<dbReference type="SMR" id="Q8JU52"/>
<dbReference type="KEGG" id="vg:2648340"/>
<dbReference type="Proteomes" id="UP000006713">
    <property type="component" value="Genome"/>
</dbReference>
<proteinExistence type="inferred from homology"/>
<accession>Q8JU52</accession>
<protein>
    <recommendedName>
        <fullName>Non-structural protein 3</fullName>
        <shortName>NS3</shortName>
    </recommendedName>
</protein>
<sequence length="244" mass="26490">MATAGITAAIDDLVISRIDEAITNNTLVQRLRKKVSSLWKDYDAHVSDPTAHELLTMPAALADLPPPPPPTDDEINRSFYATALPSVVPTSDTLWGTASYEIIGRAVRIASSDKAPRLILHVTDETIRLEVPTMSFTLASPLSTGSLLRVTLPRGAIHSSLTGKFDERCWVRLLSTLTKWSTPSTMVTSDWTLDTTTGLTKPPVTGFNARATVKDSAIVMWFPAPDIATSARRAIVSPMSCVFE</sequence>
<organism>
    <name type="scientific">Aquareovirus C (isolate Golden shiner/USA/GSRV/1977)</name>
    <name type="common">AQRV-C</name>
    <dbReference type="NCBI Taxonomy" id="185783"/>
    <lineage>
        <taxon>Viruses</taxon>
        <taxon>Riboviria</taxon>
        <taxon>Orthornavirae</taxon>
        <taxon>Duplornaviricota</taxon>
        <taxon>Resentoviricetes</taxon>
        <taxon>Reovirales</taxon>
        <taxon>Spinareoviridae</taxon>
        <taxon>Aquareovirus</taxon>
        <taxon>Aquareovirus ctenopharyngodontis</taxon>
    </lineage>
</organism>
<keyword id="KW-1185">Reference proteome</keyword>